<organism>
    <name type="scientific">Acinetobacter baumannii (strain ACICU)</name>
    <dbReference type="NCBI Taxonomy" id="405416"/>
    <lineage>
        <taxon>Bacteria</taxon>
        <taxon>Pseudomonadati</taxon>
        <taxon>Pseudomonadota</taxon>
        <taxon>Gammaproteobacteria</taxon>
        <taxon>Moraxellales</taxon>
        <taxon>Moraxellaceae</taxon>
        <taxon>Acinetobacter</taxon>
        <taxon>Acinetobacter calcoaceticus/baumannii complex</taxon>
    </lineage>
</organism>
<protein>
    <recommendedName>
        <fullName evidence="1">Uroporphyrinogen decarboxylase</fullName>
        <shortName evidence="1">UPD</shortName>
        <shortName evidence="1">URO-D</shortName>
        <ecNumber evidence="1">4.1.1.37</ecNumber>
    </recommendedName>
</protein>
<reference key="1">
    <citation type="journal article" date="2008" name="Antimicrob. Agents Chemother.">
        <title>Whole-genome pyrosequencing of an epidemic multidrug-resistant Acinetobacter baumannii strain belonging to the European clone II group.</title>
        <authorList>
            <person name="Iacono M."/>
            <person name="Villa L."/>
            <person name="Fortini D."/>
            <person name="Bordoni R."/>
            <person name="Imperi F."/>
            <person name="Bonnal R.J."/>
            <person name="Sicheritz-Ponten T."/>
            <person name="De Bellis G."/>
            <person name="Visca P."/>
            <person name="Cassone A."/>
            <person name="Carattoli A."/>
        </authorList>
    </citation>
    <scope>NUCLEOTIDE SEQUENCE [LARGE SCALE GENOMIC DNA]</scope>
    <source>
        <strain>ACICU</strain>
    </source>
</reference>
<proteinExistence type="inferred from homology"/>
<keyword id="KW-0963">Cytoplasm</keyword>
<keyword id="KW-0210">Decarboxylase</keyword>
<keyword id="KW-0456">Lyase</keyword>
<keyword id="KW-0627">Porphyrin biosynthesis</keyword>
<gene>
    <name evidence="1" type="primary">hemE</name>
    <name type="ordered locus">ACICU_02568</name>
</gene>
<evidence type="ECO:0000255" key="1">
    <source>
        <dbReference type="HAMAP-Rule" id="MF_00218"/>
    </source>
</evidence>
<accession>B2HVF8</accession>
<sequence length="357" mass="39378">MTTLKNDRFLRALLREPVDTTPIWMMRQAGRYLPEYRETRSKAGDFLSLCKNTEFACEVTLQPLRRYDLDAAILFSDILTIPDALGLGLYFETGEGPKFHKTVRTEQDVANLPKLNAKADLDYVMNAVSTIRSALGGQVPLIGFSGSPWTLATYMVEGGSSKEFRFTKQMMYAQPEVLHALLDHLADSVIDYLNAQIDAGAQAIQIFDSWGGALAHREYVEFSLNYMNKIIAGLQREKDGRRIPVIVFTKGGGQWLEPMIASGADALGLDWTTPLNTARNVVSGRVALQGNLDPAVLYGSAASIEKAVKAMLDDAYANGEKTGYVANLGHGITQWVDPAQPKIFVDTVHEYSAKYLG</sequence>
<name>DCUP_ACIBC</name>
<dbReference type="EC" id="4.1.1.37" evidence="1"/>
<dbReference type="EMBL" id="CP000863">
    <property type="protein sequence ID" value="ACC57880.1"/>
    <property type="molecule type" value="Genomic_DNA"/>
</dbReference>
<dbReference type="RefSeq" id="WP_000209403.1">
    <property type="nucleotide sequence ID" value="NZ_CP031380.1"/>
</dbReference>
<dbReference type="SMR" id="B2HVF8"/>
<dbReference type="KEGG" id="abc:ACICU_02568"/>
<dbReference type="HOGENOM" id="CLU_040933_0_0_6"/>
<dbReference type="UniPathway" id="UPA00251">
    <property type="reaction ID" value="UER00321"/>
</dbReference>
<dbReference type="Proteomes" id="UP000008839">
    <property type="component" value="Chromosome"/>
</dbReference>
<dbReference type="GO" id="GO:0005829">
    <property type="term" value="C:cytosol"/>
    <property type="evidence" value="ECO:0007669"/>
    <property type="project" value="TreeGrafter"/>
</dbReference>
<dbReference type="GO" id="GO:0004853">
    <property type="term" value="F:uroporphyrinogen decarboxylase activity"/>
    <property type="evidence" value="ECO:0007669"/>
    <property type="project" value="UniProtKB-UniRule"/>
</dbReference>
<dbReference type="GO" id="GO:0019353">
    <property type="term" value="P:protoporphyrinogen IX biosynthetic process from glutamate"/>
    <property type="evidence" value="ECO:0007669"/>
    <property type="project" value="TreeGrafter"/>
</dbReference>
<dbReference type="CDD" id="cd00717">
    <property type="entry name" value="URO-D"/>
    <property type="match status" value="1"/>
</dbReference>
<dbReference type="FunFam" id="3.20.20.210:FF:000001">
    <property type="entry name" value="Uroporphyrinogen decarboxylase"/>
    <property type="match status" value="1"/>
</dbReference>
<dbReference type="Gene3D" id="3.20.20.210">
    <property type="match status" value="1"/>
</dbReference>
<dbReference type="HAMAP" id="MF_00218">
    <property type="entry name" value="URO_D"/>
    <property type="match status" value="1"/>
</dbReference>
<dbReference type="InterPro" id="IPR038071">
    <property type="entry name" value="UROD/MetE-like_sf"/>
</dbReference>
<dbReference type="InterPro" id="IPR006361">
    <property type="entry name" value="Uroporphyrinogen_deCO2ase_HemE"/>
</dbReference>
<dbReference type="InterPro" id="IPR000257">
    <property type="entry name" value="Uroporphyrinogen_deCOase"/>
</dbReference>
<dbReference type="NCBIfam" id="TIGR01464">
    <property type="entry name" value="hemE"/>
    <property type="match status" value="1"/>
</dbReference>
<dbReference type="PANTHER" id="PTHR21091">
    <property type="entry name" value="METHYLTETRAHYDROFOLATE:HOMOCYSTEINE METHYLTRANSFERASE RELATED"/>
    <property type="match status" value="1"/>
</dbReference>
<dbReference type="PANTHER" id="PTHR21091:SF169">
    <property type="entry name" value="UROPORPHYRINOGEN DECARBOXYLASE"/>
    <property type="match status" value="1"/>
</dbReference>
<dbReference type="Pfam" id="PF01208">
    <property type="entry name" value="URO-D"/>
    <property type="match status" value="1"/>
</dbReference>
<dbReference type="SUPFAM" id="SSF51726">
    <property type="entry name" value="UROD/MetE-like"/>
    <property type="match status" value="1"/>
</dbReference>
<dbReference type="PROSITE" id="PS00906">
    <property type="entry name" value="UROD_1"/>
    <property type="match status" value="1"/>
</dbReference>
<dbReference type="PROSITE" id="PS00907">
    <property type="entry name" value="UROD_2"/>
    <property type="match status" value="1"/>
</dbReference>
<feature type="chain" id="PRO_1000099966" description="Uroporphyrinogen decarboxylase">
    <location>
        <begin position="1"/>
        <end position="357"/>
    </location>
</feature>
<feature type="binding site" evidence="1">
    <location>
        <begin position="27"/>
        <end position="31"/>
    </location>
    <ligand>
        <name>substrate</name>
    </ligand>
</feature>
<feature type="binding site" evidence="1">
    <location>
        <position position="77"/>
    </location>
    <ligand>
        <name>substrate</name>
    </ligand>
</feature>
<feature type="binding site" evidence="1">
    <location>
        <position position="154"/>
    </location>
    <ligand>
        <name>substrate</name>
    </ligand>
</feature>
<feature type="binding site" evidence="1">
    <location>
        <position position="209"/>
    </location>
    <ligand>
        <name>substrate</name>
    </ligand>
</feature>
<feature type="binding site" evidence="1">
    <location>
        <position position="330"/>
    </location>
    <ligand>
        <name>substrate</name>
    </ligand>
</feature>
<feature type="site" description="Transition state stabilizer" evidence="1">
    <location>
        <position position="77"/>
    </location>
</feature>
<comment type="function">
    <text evidence="1">Catalyzes the decarboxylation of four acetate groups of uroporphyrinogen-III to yield coproporphyrinogen-III.</text>
</comment>
<comment type="catalytic activity">
    <reaction evidence="1">
        <text>uroporphyrinogen III + 4 H(+) = coproporphyrinogen III + 4 CO2</text>
        <dbReference type="Rhea" id="RHEA:19865"/>
        <dbReference type="ChEBI" id="CHEBI:15378"/>
        <dbReference type="ChEBI" id="CHEBI:16526"/>
        <dbReference type="ChEBI" id="CHEBI:57308"/>
        <dbReference type="ChEBI" id="CHEBI:57309"/>
        <dbReference type="EC" id="4.1.1.37"/>
    </reaction>
</comment>
<comment type="pathway">
    <text evidence="1">Porphyrin-containing compound metabolism; protoporphyrin-IX biosynthesis; coproporphyrinogen-III from 5-aminolevulinate: step 4/4.</text>
</comment>
<comment type="subunit">
    <text evidence="1">Homodimer.</text>
</comment>
<comment type="subcellular location">
    <subcellularLocation>
        <location evidence="1">Cytoplasm</location>
    </subcellularLocation>
</comment>
<comment type="similarity">
    <text evidence="1">Belongs to the uroporphyrinogen decarboxylase family.</text>
</comment>